<organism>
    <name type="scientific">Edwardsiella ictaluri (strain 93-146)</name>
    <dbReference type="NCBI Taxonomy" id="634503"/>
    <lineage>
        <taxon>Bacteria</taxon>
        <taxon>Pseudomonadati</taxon>
        <taxon>Pseudomonadota</taxon>
        <taxon>Gammaproteobacteria</taxon>
        <taxon>Enterobacterales</taxon>
        <taxon>Hafniaceae</taxon>
        <taxon>Edwardsiella</taxon>
    </lineage>
</organism>
<evidence type="ECO:0000255" key="1">
    <source>
        <dbReference type="HAMAP-Rule" id="MF_01031"/>
    </source>
</evidence>
<comment type="function">
    <text evidence="1">Catalyzes the isomerization between 2-isopropylmalate and 3-isopropylmalate, via the formation of 2-isopropylmaleate.</text>
</comment>
<comment type="catalytic activity">
    <reaction evidence="1">
        <text>(2R,3S)-3-isopropylmalate = (2S)-2-isopropylmalate</text>
        <dbReference type="Rhea" id="RHEA:32287"/>
        <dbReference type="ChEBI" id="CHEBI:1178"/>
        <dbReference type="ChEBI" id="CHEBI:35121"/>
        <dbReference type="EC" id="4.2.1.33"/>
    </reaction>
</comment>
<comment type="pathway">
    <text evidence="1">Amino-acid biosynthesis; L-leucine biosynthesis; L-leucine from 3-methyl-2-oxobutanoate: step 2/4.</text>
</comment>
<comment type="subunit">
    <text evidence="1">Heterodimer of LeuC and LeuD.</text>
</comment>
<comment type="similarity">
    <text evidence="1">Belongs to the LeuD family. LeuD type 1 subfamily.</text>
</comment>
<proteinExistence type="inferred from homology"/>
<protein>
    <recommendedName>
        <fullName evidence="1">3-isopropylmalate dehydratase small subunit</fullName>
        <ecNumber evidence="1">4.2.1.33</ecNumber>
    </recommendedName>
    <alternativeName>
        <fullName evidence="1">Alpha-IPM isomerase</fullName>
        <shortName evidence="1">IPMI</shortName>
    </alternativeName>
    <alternativeName>
        <fullName evidence="1">Isopropylmalate isomerase</fullName>
    </alternativeName>
</protein>
<gene>
    <name evidence="1" type="primary">leuD</name>
    <name type="ordered locus">NT01EI_0717</name>
</gene>
<keyword id="KW-0028">Amino-acid biosynthesis</keyword>
<keyword id="KW-0100">Branched-chain amino acid biosynthesis</keyword>
<keyword id="KW-0432">Leucine biosynthesis</keyword>
<keyword id="KW-0456">Lyase</keyword>
<dbReference type="EC" id="4.2.1.33" evidence="1"/>
<dbReference type="EMBL" id="CP001600">
    <property type="protein sequence ID" value="ACR67938.1"/>
    <property type="molecule type" value="Genomic_DNA"/>
</dbReference>
<dbReference type="RefSeq" id="WP_015870131.1">
    <property type="nucleotide sequence ID" value="NZ_CP169062.1"/>
</dbReference>
<dbReference type="SMR" id="C5B7R1"/>
<dbReference type="STRING" id="67780.B6E78_14220"/>
<dbReference type="GeneID" id="69537779"/>
<dbReference type="KEGG" id="eic:NT01EI_0717"/>
<dbReference type="PATRIC" id="fig|634503.3.peg.646"/>
<dbReference type="HOGENOM" id="CLU_081378_0_3_6"/>
<dbReference type="OrthoDB" id="9777465at2"/>
<dbReference type="UniPathway" id="UPA00048">
    <property type="reaction ID" value="UER00071"/>
</dbReference>
<dbReference type="Proteomes" id="UP000001485">
    <property type="component" value="Chromosome"/>
</dbReference>
<dbReference type="GO" id="GO:0009316">
    <property type="term" value="C:3-isopropylmalate dehydratase complex"/>
    <property type="evidence" value="ECO:0007669"/>
    <property type="project" value="InterPro"/>
</dbReference>
<dbReference type="GO" id="GO:0003861">
    <property type="term" value="F:3-isopropylmalate dehydratase activity"/>
    <property type="evidence" value="ECO:0007669"/>
    <property type="project" value="UniProtKB-UniRule"/>
</dbReference>
<dbReference type="GO" id="GO:0009098">
    <property type="term" value="P:L-leucine biosynthetic process"/>
    <property type="evidence" value="ECO:0007669"/>
    <property type="project" value="UniProtKB-UniRule"/>
</dbReference>
<dbReference type="CDD" id="cd01577">
    <property type="entry name" value="IPMI_Swivel"/>
    <property type="match status" value="1"/>
</dbReference>
<dbReference type="FunFam" id="3.20.19.10:FF:000003">
    <property type="entry name" value="3-isopropylmalate dehydratase small subunit"/>
    <property type="match status" value="1"/>
</dbReference>
<dbReference type="Gene3D" id="3.20.19.10">
    <property type="entry name" value="Aconitase, domain 4"/>
    <property type="match status" value="1"/>
</dbReference>
<dbReference type="HAMAP" id="MF_01031">
    <property type="entry name" value="LeuD_type1"/>
    <property type="match status" value="1"/>
</dbReference>
<dbReference type="InterPro" id="IPR004431">
    <property type="entry name" value="3-IsopropMal_deHydase_ssu"/>
</dbReference>
<dbReference type="InterPro" id="IPR015928">
    <property type="entry name" value="Aconitase/3IPM_dehydase_swvl"/>
</dbReference>
<dbReference type="InterPro" id="IPR000573">
    <property type="entry name" value="AconitaseA/IPMdHydase_ssu_swvl"/>
</dbReference>
<dbReference type="InterPro" id="IPR033940">
    <property type="entry name" value="IPMI_Swivel"/>
</dbReference>
<dbReference type="InterPro" id="IPR050075">
    <property type="entry name" value="LeuD"/>
</dbReference>
<dbReference type="NCBIfam" id="TIGR00171">
    <property type="entry name" value="leuD"/>
    <property type="match status" value="1"/>
</dbReference>
<dbReference type="NCBIfam" id="NF002458">
    <property type="entry name" value="PRK01641.1"/>
    <property type="match status" value="1"/>
</dbReference>
<dbReference type="PANTHER" id="PTHR43345:SF5">
    <property type="entry name" value="3-ISOPROPYLMALATE DEHYDRATASE SMALL SUBUNIT"/>
    <property type="match status" value="1"/>
</dbReference>
<dbReference type="PANTHER" id="PTHR43345">
    <property type="entry name" value="3-ISOPROPYLMALATE DEHYDRATASE SMALL SUBUNIT 2-RELATED-RELATED"/>
    <property type="match status" value="1"/>
</dbReference>
<dbReference type="Pfam" id="PF00694">
    <property type="entry name" value="Aconitase_C"/>
    <property type="match status" value="1"/>
</dbReference>
<dbReference type="SUPFAM" id="SSF52016">
    <property type="entry name" value="LeuD/IlvD-like"/>
    <property type="match status" value="1"/>
</dbReference>
<reference key="1">
    <citation type="submission" date="2009-03" db="EMBL/GenBank/DDBJ databases">
        <title>Complete genome sequence of Edwardsiella ictaluri 93-146.</title>
        <authorList>
            <person name="Williams M.L."/>
            <person name="Gillaspy A.F."/>
            <person name="Dyer D.W."/>
            <person name="Thune R.L."/>
            <person name="Waldbieser G.C."/>
            <person name="Schuster S.C."/>
            <person name="Gipson J."/>
            <person name="Zaitshik J."/>
            <person name="Landry C."/>
            <person name="Lawrence M.L."/>
        </authorList>
    </citation>
    <scope>NUCLEOTIDE SEQUENCE [LARGE SCALE GENOMIC DNA]</scope>
    <source>
        <strain>93-146</strain>
    </source>
</reference>
<sequence>MTEFTRHTGIVVPLDAANVDTDAIIPKQFLQKVTRSGFGRHLFHDWRFLDEAGERPNPAFVLNQPPFQQGSILLARENFGCGSSREHAPWALTDYGFRVVIAPSFADIFYGNAFNSQLLPIILDEAQIAALFTLVSASPGIAFSVDVEQQTLQAGDTRYTFTLDPFRRHCLIHGLDSIGLTLRHASAIDDYEARRPAFLR</sequence>
<accession>C5B7R1</accession>
<feature type="chain" id="PRO_1000213350" description="3-isopropylmalate dehydratase small subunit">
    <location>
        <begin position="1"/>
        <end position="200"/>
    </location>
</feature>
<name>LEUD_EDWI9</name>